<evidence type="ECO:0000255" key="1">
    <source>
        <dbReference type="HAMAP-Rule" id="MF_00120"/>
    </source>
</evidence>
<evidence type="ECO:0000256" key="2">
    <source>
        <dbReference type="SAM" id="MobiDB-lite"/>
    </source>
</evidence>
<sequence length="506" mass="54102">MDAHAITCASWNMLKAQLEAGAISSLQIVRAFRNVYEEDTRSASPLGALVEFFSDAEEHARTADNLRASCAQSTKTAGANGGSVSGKPLLGLPFAVKDNISVKGKHCTCGSKLLADYRAPYDATVVARLRAAGAIPLGRTNMDEFAMGSSTEYSVYGPTRNPRDRSRTSGGSSGGSAAAVAGGQAPFALGTETGGSVRLPAAYCGLYGLKPTYGLLSRYGVVAFGSSLDQIGFFATCIDDIALALSVTSGKDLYDSTSTCPPPATGRHAVSHHLAPFSAHECSILRAAVPRELVDAPGVHPDVSAQFQRFLTWLRAQNVQVEEVTLPALQAAVPVYYLVATAEAASNLARFDGIRYGQRGDTDALLENYYRAVRTSGFGPEVQRRIIVGNYVLSRHFSGDYYRTSVRVRSRIEQECTQLLCSYHFIVCPTAATGAFPLGERIHDPLAMYCSDLFTTFVNLARLPALSVPVGTSGTGLPIGIQIIGSQWQECAVLRLAKRWEEAPHV</sequence>
<feature type="chain" id="PRO_1000095177" description="Glutamyl-tRNA(Gln) amidotransferase subunit A">
    <location>
        <begin position="1"/>
        <end position="506"/>
    </location>
</feature>
<feature type="region of interest" description="Disordered" evidence="2">
    <location>
        <begin position="153"/>
        <end position="177"/>
    </location>
</feature>
<feature type="active site" description="Charge relay system" evidence="1">
    <location>
        <position position="97"/>
    </location>
</feature>
<feature type="active site" description="Charge relay system" evidence="1">
    <location>
        <position position="172"/>
    </location>
</feature>
<feature type="active site" description="Acyl-ester intermediate" evidence="1">
    <location>
        <position position="196"/>
    </location>
</feature>
<reference key="1">
    <citation type="journal article" date="2008" name="BMC Microbiol.">
        <title>Complete genome sequence of Treponema pallidum ssp. pallidum strain SS14 determined with oligonucleotide arrays.</title>
        <authorList>
            <person name="Matejkova P."/>
            <person name="Strouhal M."/>
            <person name="Smajs D."/>
            <person name="Norris S.J."/>
            <person name="Palzkill T."/>
            <person name="Petrosino J.F."/>
            <person name="Sodergren E."/>
            <person name="Norton J.E."/>
            <person name="Singh J."/>
            <person name="Richmond T.A."/>
            <person name="Molla M.N."/>
            <person name="Albert T.J."/>
            <person name="Weinstock G.M."/>
        </authorList>
    </citation>
    <scope>NUCLEOTIDE SEQUENCE [LARGE SCALE GENOMIC DNA]</scope>
    <source>
        <strain>SS14</strain>
    </source>
</reference>
<keyword id="KW-0067">ATP-binding</keyword>
<keyword id="KW-0436">Ligase</keyword>
<keyword id="KW-0547">Nucleotide-binding</keyword>
<keyword id="KW-0648">Protein biosynthesis</keyword>
<organism>
    <name type="scientific">Treponema pallidum subsp. pallidum (strain SS14)</name>
    <dbReference type="NCBI Taxonomy" id="455434"/>
    <lineage>
        <taxon>Bacteria</taxon>
        <taxon>Pseudomonadati</taxon>
        <taxon>Spirochaetota</taxon>
        <taxon>Spirochaetia</taxon>
        <taxon>Spirochaetales</taxon>
        <taxon>Treponemataceae</taxon>
        <taxon>Treponema</taxon>
    </lineage>
</organism>
<dbReference type="EC" id="6.3.5.7" evidence="1"/>
<dbReference type="EMBL" id="CP000805">
    <property type="protein sequence ID" value="ACD71436.1"/>
    <property type="molecule type" value="Genomic_DNA"/>
</dbReference>
<dbReference type="RefSeq" id="WP_010882464.1">
    <property type="nucleotide sequence ID" value="NC_021508.1"/>
</dbReference>
<dbReference type="SMR" id="B2S4Q7"/>
<dbReference type="GeneID" id="93876767"/>
<dbReference type="KEGG" id="tpp:TPASS_1020"/>
<dbReference type="PATRIC" id="fig|455434.6.peg.1009"/>
<dbReference type="Proteomes" id="UP000001202">
    <property type="component" value="Chromosome"/>
</dbReference>
<dbReference type="GO" id="GO:0030956">
    <property type="term" value="C:glutamyl-tRNA(Gln) amidotransferase complex"/>
    <property type="evidence" value="ECO:0007669"/>
    <property type="project" value="InterPro"/>
</dbReference>
<dbReference type="GO" id="GO:0005524">
    <property type="term" value="F:ATP binding"/>
    <property type="evidence" value="ECO:0007669"/>
    <property type="project" value="UniProtKB-KW"/>
</dbReference>
<dbReference type="GO" id="GO:0050567">
    <property type="term" value="F:glutaminyl-tRNA synthase (glutamine-hydrolyzing) activity"/>
    <property type="evidence" value="ECO:0007669"/>
    <property type="project" value="UniProtKB-UniRule"/>
</dbReference>
<dbReference type="GO" id="GO:0006412">
    <property type="term" value="P:translation"/>
    <property type="evidence" value="ECO:0007669"/>
    <property type="project" value="UniProtKB-UniRule"/>
</dbReference>
<dbReference type="Gene3D" id="3.90.1300.10">
    <property type="entry name" value="Amidase signature (AS) domain"/>
    <property type="match status" value="1"/>
</dbReference>
<dbReference type="HAMAP" id="MF_00120">
    <property type="entry name" value="GatA"/>
    <property type="match status" value="1"/>
</dbReference>
<dbReference type="InterPro" id="IPR000120">
    <property type="entry name" value="Amidase"/>
</dbReference>
<dbReference type="InterPro" id="IPR020556">
    <property type="entry name" value="Amidase_CS"/>
</dbReference>
<dbReference type="InterPro" id="IPR023631">
    <property type="entry name" value="Amidase_dom"/>
</dbReference>
<dbReference type="InterPro" id="IPR036928">
    <property type="entry name" value="AS_sf"/>
</dbReference>
<dbReference type="InterPro" id="IPR004412">
    <property type="entry name" value="GatA"/>
</dbReference>
<dbReference type="NCBIfam" id="TIGR00132">
    <property type="entry name" value="gatA"/>
    <property type="match status" value="1"/>
</dbReference>
<dbReference type="PANTHER" id="PTHR11895:SF151">
    <property type="entry name" value="GLUTAMYL-TRNA(GLN) AMIDOTRANSFERASE SUBUNIT A"/>
    <property type="match status" value="1"/>
</dbReference>
<dbReference type="PANTHER" id="PTHR11895">
    <property type="entry name" value="TRANSAMIDASE"/>
    <property type="match status" value="1"/>
</dbReference>
<dbReference type="Pfam" id="PF01425">
    <property type="entry name" value="Amidase"/>
    <property type="match status" value="1"/>
</dbReference>
<dbReference type="SUPFAM" id="SSF75304">
    <property type="entry name" value="Amidase signature (AS) enzymes"/>
    <property type="match status" value="1"/>
</dbReference>
<dbReference type="PROSITE" id="PS00571">
    <property type="entry name" value="AMIDASES"/>
    <property type="match status" value="1"/>
</dbReference>
<comment type="function">
    <text evidence="1">Allows the formation of correctly charged Gln-tRNA(Gln) through the transamidation of misacylated Glu-tRNA(Gln) in organisms which lack glutaminyl-tRNA synthetase. The reaction takes place in the presence of glutamine and ATP through an activated gamma-phospho-Glu-tRNA(Gln).</text>
</comment>
<comment type="catalytic activity">
    <reaction evidence="1">
        <text>L-glutamyl-tRNA(Gln) + L-glutamine + ATP + H2O = L-glutaminyl-tRNA(Gln) + L-glutamate + ADP + phosphate + H(+)</text>
        <dbReference type="Rhea" id="RHEA:17521"/>
        <dbReference type="Rhea" id="RHEA-COMP:9681"/>
        <dbReference type="Rhea" id="RHEA-COMP:9684"/>
        <dbReference type="ChEBI" id="CHEBI:15377"/>
        <dbReference type="ChEBI" id="CHEBI:15378"/>
        <dbReference type="ChEBI" id="CHEBI:29985"/>
        <dbReference type="ChEBI" id="CHEBI:30616"/>
        <dbReference type="ChEBI" id="CHEBI:43474"/>
        <dbReference type="ChEBI" id="CHEBI:58359"/>
        <dbReference type="ChEBI" id="CHEBI:78520"/>
        <dbReference type="ChEBI" id="CHEBI:78521"/>
        <dbReference type="ChEBI" id="CHEBI:456216"/>
        <dbReference type="EC" id="6.3.5.7"/>
    </reaction>
</comment>
<comment type="subunit">
    <text evidence="1">Heterotrimer of A, B and C subunits.</text>
</comment>
<comment type="similarity">
    <text evidence="1">Belongs to the amidase family. GatA subfamily.</text>
</comment>
<accession>B2S4Q7</accession>
<gene>
    <name evidence="1" type="primary">gatA</name>
    <name type="ordered locus">TPASS_1020</name>
</gene>
<protein>
    <recommendedName>
        <fullName evidence="1">Glutamyl-tRNA(Gln) amidotransferase subunit A</fullName>
        <shortName evidence="1">Glu-ADT subunit A</shortName>
        <ecNumber evidence="1">6.3.5.7</ecNumber>
    </recommendedName>
</protein>
<proteinExistence type="inferred from homology"/>
<name>GATA_TREPS</name>